<name>NDK_MYCA1</name>
<gene>
    <name evidence="1" type="primary">ndk</name>
    <name type="ordered locus">MAV_1727</name>
</gene>
<evidence type="ECO:0000255" key="1">
    <source>
        <dbReference type="HAMAP-Rule" id="MF_00451"/>
    </source>
</evidence>
<protein>
    <recommendedName>
        <fullName evidence="1">Nucleoside diphosphate kinase</fullName>
        <shortName evidence="1">NDK</shortName>
        <shortName evidence="1">NDP kinase</shortName>
        <ecNumber evidence="1">2.7.4.6</ecNumber>
    </recommendedName>
    <alternativeName>
        <fullName evidence="1">Nucleoside-2-P kinase</fullName>
    </alternativeName>
</protein>
<dbReference type="EC" id="2.7.4.6" evidence="1"/>
<dbReference type="EMBL" id="CP000479">
    <property type="protein sequence ID" value="ABK66414.1"/>
    <property type="molecule type" value="Genomic_DNA"/>
</dbReference>
<dbReference type="RefSeq" id="WP_011724307.1">
    <property type="nucleotide sequence ID" value="NC_008595.1"/>
</dbReference>
<dbReference type="SMR" id="A0QDG6"/>
<dbReference type="KEGG" id="mav:MAV_1727"/>
<dbReference type="HOGENOM" id="CLU_060216_6_3_11"/>
<dbReference type="Proteomes" id="UP000001574">
    <property type="component" value="Chromosome"/>
</dbReference>
<dbReference type="GO" id="GO:0005737">
    <property type="term" value="C:cytoplasm"/>
    <property type="evidence" value="ECO:0007669"/>
    <property type="project" value="UniProtKB-SubCell"/>
</dbReference>
<dbReference type="GO" id="GO:0005524">
    <property type="term" value="F:ATP binding"/>
    <property type="evidence" value="ECO:0007669"/>
    <property type="project" value="UniProtKB-UniRule"/>
</dbReference>
<dbReference type="GO" id="GO:0046872">
    <property type="term" value="F:metal ion binding"/>
    <property type="evidence" value="ECO:0007669"/>
    <property type="project" value="UniProtKB-KW"/>
</dbReference>
<dbReference type="GO" id="GO:0004550">
    <property type="term" value="F:nucleoside diphosphate kinase activity"/>
    <property type="evidence" value="ECO:0007669"/>
    <property type="project" value="UniProtKB-UniRule"/>
</dbReference>
<dbReference type="GO" id="GO:0006241">
    <property type="term" value="P:CTP biosynthetic process"/>
    <property type="evidence" value="ECO:0007669"/>
    <property type="project" value="UniProtKB-UniRule"/>
</dbReference>
<dbReference type="GO" id="GO:0006183">
    <property type="term" value="P:GTP biosynthetic process"/>
    <property type="evidence" value="ECO:0007669"/>
    <property type="project" value="UniProtKB-UniRule"/>
</dbReference>
<dbReference type="GO" id="GO:0006228">
    <property type="term" value="P:UTP biosynthetic process"/>
    <property type="evidence" value="ECO:0007669"/>
    <property type="project" value="UniProtKB-UniRule"/>
</dbReference>
<dbReference type="CDD" id="cd04413">
    <property type="entry name" value="NDPk_I"/>
    <property type="match status" value="1"/>
</dbReference>
<dbReference type="FunFam" id="3.30.70.141:FF:000003">
    <property type="entry name" value="Nucleoside diphosphate kinase"/>
    <property type="match status" value="1"/>
</dbReference>
<dbReference type="Gene3D" id="3.30.70.141">
    <property type="entry name" value="Nucleoside diphosphate kinase-like domain"/>
    <property type="match status" value="1"/>
</dbReference>
<dbReference type="HAMAP" id="MF_00451">
    <property type="entry name" value="NDP_kinase"/>
    <property type="match status" value="1"/>
</dbReference>
<dbReference type="InterPro" id="IPR034907">
    <property type="entry name" value="NDK-like_dom"/>
</dbReference>
<dbReference type="InterPro" id="IPR036850">
    <property type="entry name" value="NDK-like_dom_sf"/>
</dbReference>
<dbReference type="InterPro" id="IPR001564">
    <property type="entry name" value="Nucleoside_diP_kinase"/>
</dbReference>
<dbReference type="InterPro" id="IPR023005">
    <property type="entry name" value="Nucleoside_diP_kinase_AS"/>
</dbReference>
<dbReference type="NCBIfam" id="NF001908">
    <property type="entry name" value="PRK00668.1"/>
    <property type="match status" value="1"/>
</dbReference>
<dbReference type="PANTHER" id="PTHR11349">
    <property type="entry name" value="NUCLEOSIDE DIPHOSPHATE KINASE"/>
    <property type="match status" value="1"/>
</dbReference>
<dbReference type="Pfam" id="PF00334">
    <property type="entry name" value="NDK"/>
    <property type="match status" value="1"/>
</dbReference>
<dbReference type="PRINTS" id="PR01243">
    <property type="entry name" value="NUCDPKINASE"/>
</dbReference>
<dbReference type="SMART" id="SM00562">
    <property type="entry name" value="NDK"/>
    <property type="match status" value="1"/>
</dbReference>
<dbReference type="SUPFAM" id="SSF54919">
    <property type="entry name" value="Nucleoside diphosphate kinase, NDK"/>
    <property type="match status" value="1"/>
</dbReference>
<dbReference type="PROSITE" id="PS00469">
    <property type="entry name" value="NDPK"/>
    <property type="match status" value="1"/>
</dbReference>
<dbReference type="PROSITE" id="PS51374">
    <property type="entry name" value="NDPK_LIKE"/>
    <property type="match status" value="1"/>
</dbReference>
<organism>
    <name type="scientific">Mycobacterium avium (strain 104)</name>
    <dbReference type="NCBI Taxonomy" id="243243"/>
    <lineage>
        <taxon>Bacteria</taxon>
        <taxon>Bacillati</taxon>
        <taxon>Actinomycetota</taxon>
        <taxon>Actinomycetes</taxon>
        <taxon>Mycobacteriales</taxon>
        <taxon>Mycobacteriaceae</taxon>
        <taxon>Mycobacterium</taxon>
        <taxon>Mycobacterium avium complex (MAC)</taxon>
    </lineage>
</organism>
<keyword id="KW-0067">ATP-binding</keyword>
<keyword id="KW-0963">Cytoplasm</keyword>
<keyword id="KW-0418">Kinase</keyword>
<keyword id="KW-0460">Magnesium</keyword>
<keyword id="KW-0479">Metal-binding</keyword>
<keyword id="KW-0546">Nucleotide metabolism</keyword>
<keyword id="KW-0547">Nucleotide-binding</keyword>
<keyword id="KW-0597">Phosphoprotein</keyword>
<keyword id="KW-0808">Transferase</keyword>
<proteinExistence type="inferred from homology"/>
<accession>A0QDG6</accession>
<comment type="function">
    <text evidence="1">Major role in the synthesis of nucleoside triphosphates other than ATP. The ATP gamma phosphate is transferred to the NDP beta phosphate via a ping-pong mechanism, using a phosphorylated active-site intermediate.</text>
</comment>
<comment type="catalytic activity">
    <reaction evidence="1">
        <text>a 2'-deoxyribonucleoside 5'-diphosphate + ATP = a 2'-deoxyribonucleoside 5'-triphosphate + ADP</text>
        <dbReference type="Rhea" id="RHEA:44640"/>
        <dbReference type="ChEBI" id="CHEBI:30616"/>
        <dbReference type="ChEBI" id="CHEBI:61560"/>
        <dbReference type="ChEBI" id="CHEBI:73316"/>
        <dbReference type="ChEBI" id="CHEBI:456216"/>
        <dbReference type="EC" id="2.7.4.6"/>
    </reaction>
</comment>
<comment type="catalytic activity">
    <reaction evidence="1">
        <text>a ribonucleoside 5'-diphosphate + ATP = a ribonucleoside 5'-triphosphate + ADP</text>
        <dbReference type="Rhea" id="RHEA:18113"/>
        <dbReference type="ChEBI" id="CHEBI:30616"/>
        <dbReference type="ChEBI" id="CHEBI:57930"/>
        <dbReference type="ChEBI" id="CHEBI:61557"/>
        <dbReference type="ChEBI" id="CHEBI:456216"/>
        <dbReference type="EC" id="2.7.4.6"/>
    </reaction>
</comment>
<comment type="cofactor">
    <cofactor evidence="1">
        <name>Mg(2+)</name>
        <dbReference type="ChEBI" id="CHEBI:18420"/>
    </cofactor>
</comment>
<comment type="subunit">
    <text evidence="1">Homotetramer.</text>
</comment>
<comment type="subcellular location">
    <subcellularLocation>
        <location evidence="1">Cytoplasm</location>
    </subcellularLocation>
</comment>
<comment type="similarity">
    <text evidence="1">Belongs to the NDK family.</text>
</comment>
<sequence>MTERTLVLIKPDGVQRQLVGEIIGRIERKGLTLVALELRHVSQDLAAQHYAEHEGKPFFASLLEFITSGPVVAAIVEGPRAIAAFRQLAGGTDPVEKAIPGTIRGDFGLETQFNLVHGSDSVESAKREIALWFPDA</sequence>
<feature type="chain" id="PRO_1000026254" description="Nucleoside diphosphate kinase">
    <location>
        <begin position="1"/>
        <end position="136"/>
    </location>
</feature>
<feature type="active site" description="Pros-phosphohistidine intermediate" evidence="1">
    <location>
        <position position="117"/>
    </location>
</feature>
<feature type="binding site" evidence="1">
    <location>
        <position position="10"/>
    </location>
    <ligand>
        <name>ATP</name>
        <dbReference type="ChEBI" id="CHEBI:30616"/>
    </ligand>
</feature>
<feature type="binding site" evidence="1">
    <location>
        <position position="58"/>
    </location>
    <ligand>
        <name>ATP</name>
        <dbReference type="ChEBI" id="CHEBI:30616"/>
    </ligand>
</feature>
<feature type="binding site" evidence="1">
    <location>
        <position position="86"/>
    </location>
    <ligand>
        <name>ATP</name>
        <dbReference type="ChEBI" id="CHEBI:30616"/>
    </ligand>
</feature>
<feature type="binding site" evidence="1">
    <location>
        <position position="92"/>
    </location>
    <ligand>
        <name>ATP</name>
        <dbReference type="ChEBI" id="CHEBI:30616"/>
    </ligand>
</feature>
<feature type="binding site" evidence="1">
    <location>
        <position position="104"/>
    </location>
    <ligand>
        <name>ATP</name>
        <dbReference type="ChEBI" id="CHEBI:30616"/>
    </ligand>
</feature>
<feature type="binding site" evidence="1">
    <location>
        <position position="114"/>
    </location>
    <ligand>
        <name>ATP</name>
        <dbReference type="ChEBI" id="CHEBI:30616"/>
    </ligand>
</feature>
<reference key="1">
    <citation type="submission" date="2006-10" db="EMBL/GenBank/DDBJ databases">
        <authorList>
            <person name="Fleischmann R.D."/>
            <person name="Dodson R.J."/>
            <person name="Haft D.H."/>
            <person name="Merkel J.S."/>
            <person name="Nelson W.C."/>
            <person name="Fraser C.M."/>
        </authorList>
    </citation>
    <scope>NUCLEOTIDE SEQUENCE [LARGE SCALE GENOMIC DNA]</scope>
    <source>
        <strain>104</strain>
    </source>
</reference>